<feature type="chain" id="PRO_1000040496" description="6,7-dimethyl-8-ribityllumazine synthase">
    <location>
        <begin position="1"/>
        <end position="166"/>
    </location>
</feature>
<feature type="active site" description="Proton donor" evidence="1">
    <location>
        <position position="90"/>
    </location>
</feature>
<feature type="binding site" evidence="1">
    <location>
        <position position="24"/>
    </location>
    <ligand>
        <name>5-amino-6-(D-ribitylamino)uracil</name>
        <dbReference type="ChEBI" id="CHEBI:15934"/>
    </ligand>
</feature>
<feature type="binding site" evidence="1">
    <location>
        <begin position="58"/>
        <end position="60"/>
    </location>
    <ligand>
        <name>5-amino-6-(D-ribitylamino)uracil</name>
        <dbReference type="ChEBI" id="CHEBI:15934"/>
    </ligand>
</feature>
<feature type="binding site" evidence="1">
    <location>
        <begin position="82"/>
        <end position="84"/>
    </location>
    <ligand>
        <name>5-amino-6-(D-ribitylamino)uracil</name>
        <dbReference type="ChEBI" id="CHEBI:15934"/>
    </ligand>
</feature>
<feature type="binding site" evidence="1">
    <location>
        <begin position="87"/>
        <end position="88"/>
    </location>
    <ligand>
        <name>(2S)-2-hydroxy-3-oxobutyl phosphate</name>
        <dbReference type="ChEBI" id="CHEBI:58830"/>
    </ligand>
</feature>
<feature type="binding site" evidence="1">
    <location>
        <position position="115"/>
    </location>
    <ligand>
        <name>5-amino-6-(D-ribitylamino)uracil</name>
        <dbReference type="ChEBI" id="CHEBI:15934"/>
    </ligand>
</feature>
<feature type="binding site" evidence="1">
    <location>
        <position position="129"/>
    </location>
    <ligand>
        <name>(2S)-2-hydroxy-3-oxobutyl phosphate</name>
        <dbReference type="ChEBI" id="CHEBI:58830"/>
    </ligand>
</feature>
<dbReference type="EC" id="2.5.1.78" evidence="1"/>
<dbReference type="EMBL" id="AM260479">
    <property type="protein sequence ID" value="CAJ93932.1"/>
    <property type="molecule type" value="Genomic_DNA"/>
</dbReference>
<dbReference type="RefSeq" id="WP_010813763.1">
    <property type="nucleotide sequence ID" value="NZ_CP039287.1"/>
</dbReference>
<dbReference type="SMR" id="Q0K7T9"/>
<dbReference type="STRING" id="381666.H16_A2855"/>
<dbReference type="KEGG" id="reh:H16_A2855"/>
<dbReference type="eggNOG" id="COG0054">
    <property type="taxonomic scope" value="Bacteria"/>
</dbReference>
<dbReference type="HOGENOM" id="CLU_089358_1_2_4"/>
<dbReference type="OrthoDB" id="9809709at2"/>
<dbReference type="UniPathway" id="UPA00275">
    <property type="reaction ID" value="UER00404"/>
</dbReference>
<dbReference type="Proteomes" id="UP000008210">
    <property type="component" value="Chromosome 1"/>
</dbReference>
<dbReference type="GO" id="GO:0005829">
    <property type="term" value="C:cytosol"/>
    <property type="evidence" value="ECO:0007669"/>
    <property type="project" value="TreeGrafter"/>
</dbReference>
<dbReference type="GO" id="GO:0009349">
    <property type="term" value="C:riboflavin synthase complex"/>
    <property type="evidence" value="ECO:0007669"/>
    <property type="project" value="InterPro"/>
</dbReference>
<dbReference type="GO" id="GO:0000906">
    <property type="term" value="F:6,7-dimethyl-8-ribityllumazine synthase activity"/>
    <property type="evidence" value="ECO:0007669"/>
    <property type="project" value="UniProtKB-UniRule"/>
</dbReference>
<dbReference type="GO" id="GO:0009231">
    <property type="term" value="P:riboflavin biosynthetic process"/>
    <property type="evidence" value="ECO:0007669"/>
    <property type="project" value="UniProtKB-UniRule"/>
</dbReference>
<dbReference type="CDD" id="cd09209">
    <property type="entry name" value="Lumazine_synthase-I"/>
    <property type="match status" value="1"/>
</dbReference>
<dbReference type="Gene3D" id="3.40.50.960">
    <property type="entry name" value="Lumazine/riboflavin synthase"/>
    <property type="match status" value="1"/>
</dbReference>
<dbReference type="HAMAP" id="MF_00178">
    <property type="entry name" value="Lumazine_synth"/>
    <property type="match status" value="1"/>
</dbReference>
<dbReference type="InterPro" id="IPR034964">
    <property type="entry name" value="LS"/>
</dbReference>
<dbReference type="InterPro" id="IPR002180">
    <property type="entry name" value="LS/RS"/>
</dbReference>
<dbReference type="InterPro" id="IPR036467">
    <property type="entry name" value="LS/RS_sf"/>
</dbReference>
<dbReference type="NCBIfam" id="TIGR00114">
    <property type="entry name" value="lumazine-synth"/>
    <property type="match status" value="1"/>
</dbReference>
<dbReference type="PANTHER" id="PTHR21058:SF0">
    <property type="entry name" value="6,7-DIMETHYL-8-RIBITYLLUMAZINE SYNTHASE"/>
    <property type="match status" value="1"/>
</dbReference>
<dbReference type="PANTHER" id="PTHR21058">
    <property type="entry name" value="6,7-DIMETHYL-8-RIBITYLLUMAZINE SYNTHASE DMRL SYNTHASE LUMAZINE SYNTHASE"/>
    <property type="match status" value="1"/>
</dbReference>
<dbReference type="Pfam" id="PF00885">
    <property type="entry name" value="DMRL_synthase"/>
    <property type="match status" value="1"/>
</dbReference>
<dbReference type="SUPFAM" id="SSF52121">
    <property type="entry name" value="Lumazine synthase"/>
    <property type="match status" value="1"/>
</dbReference>
<comment type="function">
    <text evidence="1">Catalyzes the formation of 6,7-dimethyl-8-ribityllumazine by condensation of 5-amino-6-(D-ribitylamino)uracil with 3,4-dihydroxy-2-butanone 4-phosphate. This is the penultimate step in the biosynthesis of riboflavin.</text>
</comment>
<comment type="catalytic activity">
    <reaction evidence="1">
        <text>(2S)-2-hydroxy-3-oxobutyl phosphate + 5-amino-6-(D-ribitylamino)uracil = 6,7-dimethyl-8-(1-D-ribityl)lumazine + phosphate + 2 H2O + H(+)</text>
        <dbReference type="Rhea" id="RHEA:26152"/>
        <dbReference type="ChEBI" id="CHEBI:15377"/>
        <dbReference type="ChEBI" id="CHEBI:15378"/>
        <dbReference type="ChEBI" id="CHEBI:15934"/>
        <dbReference type="ChEBI" id="CHEBI:43474"/>
        <dbReference type="ChEBI" id="CHEBI:58201"/>
        <dbReference type="ChEBI" id="CHEBI:58830"/>
        <dbReference type="EC" id="2.5.1.78"/>
    </reaction>
</comment>
<comment type="pathway">
    <text evidence="1">Cofactor biosynthesis; riboflavin biosynthesis; riboflavin from 2-hydroxy-3-oxobutyl phosphate and 5-amino-6-(D-ribitylamino)uracil: step 1/2.</text>
</comment>
<comment type="similarity">
    <text evidence="1">Belongs to the DMRL synthase family.</text>
</comment>
<evidence type="ECO:0000255" key="1">
    <source>
        <dbReference type="HAMAP-Rule" id="MF_00178"/>
    </source>
</evidence>
<gene>
    <name evidence="1" type="primary">ribH</name>
    <name type="ordered locus">H16_A2855</name>
</gene>
<proteinExistence type="inferred from homology"/>
<accession>Q0K7T9</accession>
<organism>
    <name type="scientific">Cupriavidus necator (strain ATCC 17699 / DSM 428 / KCTC 22496 / NCIMB 10442 / H16 / Stanier 337)</name>
    <name type="common">Ralstonia eutropha</name>
    <dbReference type="NCBI Taxonomy" id="381666"/>
    <lineage>
        <taxon>Bacteria</taxon>
        <taxon>Pseudomonadati</taxon>
        <taxon>Pseudomonadota</taxon>
        <taxon>Betaproteobacteria</taxon>
        <taxon>Burkholderiales</taxon>
        <taxon>Burkholderiaceae</taxon>
        <taxon>Cupriavidus</taxon>
    </lineage>
</organism>
<name>RISB_CUPNH</name>
<protein>
    <recommendedName>
        <fullName evidence="1">6,7-dimethyl-8-ribityllumazine synthase</fullName>
        <shortName evidence="1">DMRL synthase</shortName>
        <shortName evidence="1">LS</shortName>
        <shortName evidence="1">Lumazine synthase</shortName>
        <ecNumber evidence="1">2.5.1.78</ecNumber>
    </recommendedName>
</protein>
<keyword id="KW-1185">Reference proteome</keyword>
<keyword id="KW-0686">Riboflavin biosynthesis</keyword>
<keyword id="KW-0808">Transferase</keyword>
<sequence length="166" mass="17801">MDHGFYPSNLDGEGLRIGIVQARFNEPVCAELLEACVAELEKLGVEGEDTLVVTVPGALEIPLALQKMCESGQFDALVALGAVVRGETYHFELVSNESGAGITRVGLDFNVPIANGILTVDTDEQAHARTREKGRDCARAAVEMANLVAALDSLRGQEDEDEDDDE</sequence>
<reference key="1">
    <citation type="journal article" date="2006" name="Nat. Biotechnol.">
        <title>Genome sequence of the bioplastic-producing 'Knallgas' bacterium Ralstonia eutropha H16.</title>
        <authorList>
            <person name="Pohlmann A."/>
            <person name="Fricke W.F."/>
            <person name="Reinecke F."/>
            <person name="Kusian B."/>
            <person name="Liesegang H."/>
            <person name="Cramm R."/>
            <person name="Eitinger T."/>
            <person name="Ewering C."/>
            <person name="Poetter M."/>
            <person name="Schwartz E."/>
            <person name="Strittmatter A."/>
            <person name="Voss I."/>
            <person name="Gottschalk G."/>
            <person name="Steinbuechel A."/>
            <person name="Friedrich B."/>
            <person name="Bowien B."/>
        </authorList>
    </citation>
    <scope>NUCLEOTIDE SEQUENCE [LARGE SCALE GENOMIC DNA]</scope>
    <source>
        <strain>ATCC 17699 / DSM 428 / KCTC 22496 / NCIMB 10442 / H16 / Stanier 337</strain>
    </source>
</reference>